<sequence length="276" mass="28447">MKILKRIPVLAVLLVGLMTNCSNDSDSSSLSVANSTYETTALNSQKSSTDQPNSGSKSGQTLDLVNLGVAANFAILSKTGITDVYKSAITGDVGASPITGAAILLKCDEVTGTIFSVDAAGPACKITDASRLTTAVGDMQIAYDNAAGRLNPDFLNLGAGTIGGKTLTPGLYKWTSTLNIPTDITISGSSTDVWIFQVAGNLNMSSAVRITLAGGAQAKNIFWQTAGAVTLGSTSHFEGNILSQTGINMKTAASINGRMMAQTAVTLQMNTVTIPQ</sequence>
<name>IBP_FLAFP</name>
<feature type="signal peptide" evidence="1">
    <location>
        <begin position="1"/>
        <end position="24"/>
    </location>
</feature>
<feature type="chain" id="PRO_5003610596" description="Ice-binding protein" evidence="1">
    <location>
        <begin position="25"/>
        <end position="276"/>
    </location>
</feature>
<feature type="short sequence motif" description="Ice-binding site motif (T-A/G-X-T/N) 1" evidence="8">
    <location>
        <begin position="79"/>
        <end position="82"/>
    </location>
</feature>
<feature type="short sequence motif" description="Ice-binding site motif (T-A/G-X-T/N) 2" evidence="8">
    <location>
        <begin position="245"/>
        <end position="248"/>
    </location>
</feature>
<feature type="short sequence motif" description="Ice-binding site motif (T-A/G-X-T/N) 3" evidence="8">
    <location>
        <begin position="263"/>
        <end position="266"/>
    </location>
</feature>
<feature type="site" description="Ice-binding" evidence="3">
    <location>
        <position position="251"/>
    </location>
</feature>
<feature type="disulfide bond" evidence="3 12 14">
    <location>
        <begin position="107"/>
        <end position="124"/>
    </location>
</feature>
<feature type="mutagenesis site" description="Increased thermal hysteresis (TH) activity compared to wild-type." evidence="4">
    <original>N</original>
    <variation>A</variation>
    <variation>Q</variation>
    <location>
        <position position="203"/>
    </location>
</feature>
<feature type="mutagenesis site" description="No effect on thermal hysteresis (TH) activity." evidence="3">
    <original>T</original>
    <variation>Y</variation>
    <location>
        <position position="211"/>
    </location>
</feature>
<feature type="mutagenesis site" description="No effect on thermal hysteresis (TH) activity." evidence="3">
    <original>T</original>
    <variation>Y</variation>
    <location>
        <position position="234"/>
    </location>
</feature>
<feature type="mutagenesis site" description="Has 43% thermal hysteresis (TH) activity of that of the wild-type." evidence="3">
    <original>N</original>
    <variation>Y</variation>
    <location>
        <position position="248"/>
    </location>
</feature>
<feature type="mutagenesis site" description="Has 11% thermal hysteresis (TH) activity of that of the wild-type." evidence="3">
    <original>T</original>
    <variation>Y</variation>
    <location>
        <position position="251"/>
    </location>
</feature>
<feature type="mutagenesis site" description="Has 33% thermal hysteresis (TH) activity of that of the wild-type." evidence="3">
    <original>T</original>
    <variation>Y</variation>
    <location>
        <position position="266"/>
    </location>
</feature>
<feature type="helix" evidence="15">
    <location>
        <begin position="68"/>
        <end position="72"/>
    </location>
</feature>
<feature type="strand" evidence="15">
    <location>
        <begin position="73"/>
        <end position="79"/>
    </location>
</feature>
<feature type="strand" evidence="15">
    <location>
        <begin position="81"/>
        <end position="85"/>
    </location>
</feature>
<feature type="strand" evidence="15">
    <location>
        <begin position="88"/>
        <end position="98"/>
    </location>
</feature>
<feature type="helix" evidence="15">
    <location>
        <begin position="100"/>
        <end position="102"/>
    </location>
</feature>
<feature type="helix" evidence="15">
    <location>
        <begin position="107"/>
        <end position="109"/>
    </location>
</feature>
<feature type="strand" evidence="15">
    <location>
        <begin position="110"/>
        <end position="112"/>
    </location>
</feature>
<feature type="strand" evidence="15">
    <location>
        <begin position="114"/>
        <end position="119"/>
    </location>
</feature>
<feature type="helix" evidence="15">
    <location>
        <begin position="129"/>
        <end position="148"/>
    </location>
</feature>
<feature type="strand" evidence="15">
    <location>
        <begin position="153"/>
        <end position="156"/>
    </location>
</feature>
<feature type="helix" evidence="15">
    <location>
        <begin position="157"/>
        <end position="160"/>
    </location>
</feature>
<feature type="strand" evidence="15">
    <location>
        <begin position="169"/>
        <end position="176"/>
    </location>
</feature>
<feature type="strand" evidence="15">
    <location>
        <begin position="178"/>
        <end position="180"/>
    </location>
</feature>
<feature type="strand" evidence="15">
    <location>
        <begin position="184"/>
        <end position="187"/>
    </location>
</feature>
<feature type="strand" evidence="15">
    <location>
        <begin position="194"/>
        <end position="200"/>
    </location>
</feature>
<feature type="strand" evidence="15">
    <location>
        <begin position="202"/>
        <end position="204"/>
    </location>
</feature>
<feature type="strand" evidence="15">
    <location>
        <begin position="209"/>
        <end position="213"/>
    </location>
</feature>
<feature type="helix" evidence="15">
    <location>
        <begin position="218"/>
        <end position="220"/>
    </location>
</feature>
<feature type="strand" evidence="15">
    <location>
        <begin position="221"/>
        <end position="227"/>
    </location>
</feature>
<feature type="strand" evidence="15">
    <location>
        <begin position="229"/>
        <end position="231"/>
    </location>
</feature>
<feature type="strand" evidence="15">
    <location>
        <begin position="236"/>
        <end position="245"/>
    </location>
</feature>
<feature type="strand" evidence="15">
    <location>
        <begin position="247"/>
        <end position="249"/>
    </location>
</feature>
<feature type="strand" evidence="15">
    <location>
        <begin position="254"/>
        <end position="263"/>
    </location>
</feature>
<feature type="strand" evidence="15">
    <location>
        <begin position="265"/>
        <end position="269"/>
    </location>
</feature>
<feature type="strand" evidence="15">
    <location>
        <begin position="271"/>
        <end position="273"/>
    </location>
</feature>
<organism>
    <name type="scientific">Flavobacterium frigoris (strain PS1)</name>
    <dbReference type="NCBI Taxonomy" id="1086011"/>
    <lineage>
        <taxon>Bacteria</taxon>
        <taxon>Pseudomonadati</taxon>
        <taxon>Bacteroidota</taxon>
        <taxon>Flavobacteriia</taxon>
        <taxon>Flavobacteriales</taxon>
        <taxon>Flavobacteriaceae</taxon>
        <taxon>Flavobacterium</taxon>
    </lineage>
</organism>
<comment type="function">
    <text evidence="2 3 4">Has antifreeze activity for survival in a subzero environment. Binds to the surface of ice crystals and inhibits their growth. Has high thermal hysteresis (TH) activity, which is the ability to lower the freezing point of an aqueous solution below its melting point, and thus the freezing of the cell fluid can be prevented protecting the organism from ice damage (PubMed:22750870, PubMed:24699650, PubMed:27737617). The TH activity of this protein is 2.2 degrees Celsius at 5 uM and 2.5 degrees Celsius at 50 uM (PubMed:24699650).</text>
</comment>
<comment type="biophysicochemical properties">
    <temperatureDependence>
        <text evidence="3">Active at low temperatures, even below 0 degree Celsius. Thermal denaturation midpoint (Tm) is 56.4 degrees Celsius.</text>
    </temperatureDependence>
</comment>
<comment type="subunit">
    <text evidence="2 3">Monomer.</text>
</comment>
<comment type="subcellular location">
    <subcellularLocation>
        <location evidence="4">Secreted</location>
    </subcellularLocation>
</comment>
<comment type="domain">
    <text evidence="8">The ice-binding site is formed by three T-A/G-X-T/N motifs.</text>
</comment>
<comment type="similarity">
    <text evidence="7">Belongs to the ice-binding protein family.</text>
</comment>
<reference evidence="9" key="1">
    <citation type="submission" date="2012-02" db="EMBL/GenBank/DDBJ databases">
        <title>An Antarctic sea ice bacterium that secretes ice-binding proteins.</title>
        <authorList>
            <person name="Raymond J."/>
            <person name="Kim H.J."/>
        </authorList>
    </citation>
    <scope>NUCLEOTIDE SEQUENCE [GENOMIC DNA]</scope>
    <source>
        <strain evidence="9">PS1</strain>
    </source>
</reference>
<reference evidence="10 11" key="2">
    <citation type="submission" date="2012-02" db="EMBL/GenBank/DDBJ databases">
        <title>Flavobacterium frigoris PS1, a freeze-tolerant bacterium from Antarctic sea ice.</title>
        <authorList>
            <person name="Raymond J."/>
            <person name="Kim H.J."/>
        </authorList>
    </citation>
    <scope>NUCLEOTIDE SEQUENCE [LARGE SCALE GENOMIC DNA]</scope>
    <source>
        <strain evidence="10 11">PS1</strain>
    </source>
</reference>
<reference key="3">
    <citation type="journal article" date="2012" name="Acta Crystallogr. F">
        <title>Crystallization and preliminary X-ray crystallographic analysis of an ice-binding protein (FfIBP) from Flavobacterium frigoris PS1.</title>
        <authorList>
            <person name="Do H."/>
            <person name="Lee J.H."/>
            <person name="Lee S.G."/>
            <person name="Kim H.J."/>
        </authorList>
    </citation>
    <scope>CRYSTALLIZATION OF 29-276</scope>
    <scope>FUNCTION</scope>
    <scope>SUBUNIT</scope>
    <source>
        <strain evidence="5">PS1</strain>
    </source>
</reference>
<reference key="4">
    <citation type="journal article" date="2017" name="Prep. Biochem. Biotechnol.">
        <title>Improving thermal hysteresis activity of antifreeze protein from recombinant Pichia pastoris by removal of N-glycosylation.</title>
        <authorList>
            <person name="Kim E.J."/>
            <person name="Lee J.H."/>
            <person name="Lee S.G."/>
            <person name="Han S.J."/>
        </authorList>
    </citation>
    <scope>FUNCTION</scope>
    <scope>SUBCELLULAR LOCATION</scope>
    <scope>MUTAGENESIS OF ASN-203</scope>
    <source>
        <strain evidence="6">PS1</strain>
    </source>
</reference>
<reference evidence="12 13 14" key="5">
    <citation type="journal article" date="2014" name="Acta Crystallogr. D">
        <title>Structure-based characterization and antifreeze properties of a hyperactive ice-binding protein from the Antarctic bacterium Flavobacterium frigoris PS1.</title>
        <authorList>
            <person name="Do H."/>
            <person name="Kim S.J."/>
            <person name="Kim H.J."/>
            <person name="Lee J.H."/>
        </authorList>
    </citation>
    <scope>X-RAY CRYSTALLOGRAPHY (2.10 ANGSTROMS) OF 61-276</scope>
    <scope>X-RAY CRYSTALLOGRAPHY (1.34 ANGSTROMS) OF 58-92; 91-132 AND 130-276 OF CHIMERA WITH FUNGAL ANTIFREEZE PROTEIN</scope>
    <scope>FUNCTION</scope>
    <scope>BIOPHYSICOCHEMICAL PROPERTIES</scope>
    <scope>SUBUNIT</scope>
    <scope>DOMAIN</scope>
    <scope>MOTIF</scope>
    <scope>DISULFIDE BOND</scope>
    <scope>MUTAGENESIS OF THR-211; THR-234; ASN-248; THR-251 AND THR-266</scope>
    <scope>CIRCULAR DICHROISM ANALYSIS</scope>
    <source>
        <strain evidence="10">PS1</strain>
    </source>
</reference>
<protein>
    <recommendedName>
        <fullName evidence="5 9">Ice-binding protein</fullName>
    </recommendedName>
    <alternativeName>
        <fullName evidence="10">Antifreeze protein</fullName>
        <shortName evidence="7">AFP</shortName>
    </alternativeName>
    <alternativeName>
        <fullName evidence="5">FfIBP</fullName>
    </alternativeName>
</protein>
<evidence type="ECO:0000255" key="1"/>
<evidence type="ECO:0000269" key="2">
    <source>
    </source>
</evidence>
<evidence type="ECO:0000269" key="3">
    <source>
    </source>
</evidence>
<evidence type="ECO:0000269" key="4">
    <source>
    </source>
</evidence>
<evidence type="ECO:0000303" key="5">
    <source>
    </source>
</evidence>
<evidence type="ECO:0000303" key="6">
    <source>
    </source>
</evidence>
<evidence type="ECO:0000305" key="7"/>
<evidence type="ECO:0000305" key="8">
    <source>
    </source>
</evidence>
<evidence type="ECO:0000312" key="9">
    <source>
        <dbReference type="EMBL" id="AFK13196.1"/>
    </source>
</evidence>
<evidence type="ECO:0000312" key="10">
    <source>
        <dbReference type="EMBL" id="EIA07191.1"/>
    </source>
</evidence>
<evidence type="ECO:0000312" key="11">
    <source>
        <dbReference type="Proteomes" id="UP000005566"/>
    </source>
</evidence>
<evidence type="ECO:0007744" key="12">
    <source>
        <dbReference type="PDB" id="4NU2"/>
    </source>
</evidence>
<evidence type="ECO:0007744" key="13">
    <source>
        <dbReference type="PDB" id="4NU3"/>
    </source>
</evidence>
<evidence type="ECO:0007744" key="14">
    <source>
        <dbReference type="PDB" id="4NUH"/>
    </source>
</evidence>
<evidence type="ECO:0007829" key="15">
    <source>
        <dbReference type="PDB" id="4NUH"/>
    </source>
</evidence>
<gene>
    <name evidence="10" type="ORF">HJ01_03463</name>
</gene>
<dbReference type="EMBL" id="JQ712369">
    <property type="protein sequence ID" value="AFK13196.1"/>
    <property type="molecule type" value="Genomic_DNA"/>
</dbReference>
<dbReference type="EMBL" id="AHKF01000032">
    <property type="protein sequence ID" value="EIA07191.1"/>
    <property type="molecule type" value="Genomic_DNA"/>
</dbReference>
<dbReference type="RefSeq" id="WP_007139641.1">
    <property type="nucleotide sequence ID" value="NZ_AHKF01000032.1"/>
</dbReference>
<dbReference type="PDB" id="4NU2">
    <property type="method" value="X-ray"/>
    <property type="resolution" value="2.10 A"/>
    <property type="chains" value="A=29-276"/>
</dbReference>
<dbReference type="PDB" id="4NU3">
    <property type="method" value="X-ray"/>
    <property type="resolution" value="1.40 A"/>
    <property type="chains" value="A/B=58-92, A/B=130-276"/>
</dbReference>
<dbReference type="PDB" id="4NUH">
    <property type="method" value="X-ray"/>
    <property type="resolution" value="1.34 A"/>
    <property type="chains" value="A=91-132"/>
</dbReference>
<dbReference type="PDB" id="7EHK">
    <property type="method" value="X-ray"/>
    <property type="resolution" value="2.00 A"/>
    <property type="chains" value="A=29-276"/>
</dbReference>
<dbReference type="PDB" id="8X0Z">
    <property type="method" value="X-ray"/>
    <property type="resolution" value="2.10 A"/>
    <property type="chains" value="A=29-276"/>
</dbReference>
<dbReference type="PDB" id="8X1L">
    <property type="method" value="X-ray"/>
    <property type="resolution" value="2.00 A"/>
    <property type="chains" value="A=29-276"/>
</dbReference>
<dbReference type="PDB" id="8X1O">
    <property type="method" value="X-ray"/>
    <property type="resolution" value="2.10 A"/>
    <property type="chains" value="A=29-276"/>
</dbReference>
<dbReference type="PDB" id="8X1P">
    <property type="method" value="X-ray"/>
    <property type="resolution" value="2.00 A"/>
    <property type="chains" value="A=29-276"/>
</dbReference>
<dbReference type="PDBsum" id="4NU2"/>
<dbReference type="PDBsum" id="4NU3"/>
<dbReference type="PDBsum" id="4NUH"/>
<dbReference type="PDBsum" id="7EHK"/>
<dbReference type="PDBsum" id="8X0Z"/>
<dbReference type="PDBsum" id="8X1L"/>
<dbReference type="PDBsum" id="8X1O"/>
<dbReference type="PDBsum" id="8X1P"/>
<dbReference type="SMR" id="H7FWB6"/>
<dbReference type="STRING" id="1086011.HJ01_03463"/>
<dbReference type="PATRIC" id="fig|1086011.3.peg.3394"/>
<dbReference type="eggNOG" id="COG3420">
    <property type="taxonomic scope" value="Bacteria"/>
</dbReference>
<dbReference type="OrthoDB" id="2082707at2"/>
<dbReference type="EvolutionaryTrace" id="H7FWB6"/>
<dbReference type="Proteomes" id="UP000005566">
    <property type="component" value="Unassembled WGS sequence"/>
</dbReference>
<dbReference type="GO" id="GO:0005576">
    <property type="term" value="C:extracellular region"/>
    <property type="evidence" value="ECO:0007669"/>
    <property type="project" value="UniProtKB-SubCell"/>
</dbReference>
<dbReference type="InterPro" id="IPR021884">
    <property type="entry name" value="Ice-bd_prot"/>
</dbReference>
<dbReference type="NCBIfam" id="NF045625">
    <property type="entry name" value="IBP_CFB"/>
    <property type="match status" value="1"/>
</dbReference>
<dbReference type="Pfam" id="PF11999">
    <property type="entry name" value="Ice_binding"/>
    <property type="match status" value="1"/>
</dbReference>
<keyword id="KW-0002">3D-structure</keyword>
<keyword id="KW-0047">Antifreeze protein</keyword>
<keyword id="KW-1015">Disulfide bond</keyword>
<keyword id="KW-0964">Secreted</keyword>
<keyword id="KW-0732">Signal</keyword>
<keyword id="KW-0346">Stress response</keyword>
<proteinExistence type="evidence at protein level"/>
<accession>H7FWB6</accession>
<accession>I3QNZ8</accession>